<name>NNMT_RAUSE</name>
<reference evidence="9" key="1">
    <citation type="journal article" date="2016" name="Plant Physiol.">
        <title>A picrinine N-methyltransferase belongs to a new family of gamma-tocopherol-like methyltransferases found in medicinal plants that make biologically active monoterpenoid indole alkaloids.</title>
        <authorList>
            <person name="Levac D."/>
            <person name="Cazares P."/>
            <person name="Yu F."/>
            <person name="De Luca V."/>
        </authorList>
    </citation>
    <scope>NUCLEOTIDE SEQUENCE [MRNA]</scope>
    <source>
        <tissue>Root</tissue>
    </source>
</reference>
<reference key="2">
    <citation type="journal article" date="2016" name="Plant J.">
        <title>Rauvolfia serpentina N-methyltransferases involved in ajmaline and Nbeta -methylajmaline biosynthesis belong to a gene family derived from gamma-tocopherol C-methyltransferase.</title>
        <authorList>
            <person name="Cazares-Flores P."/>
            <person name="Levac D."/>
            <person name="De Luca V."/>
        </authorList>
    </citation>
    <scope>FUNCTION</scope>
    <scope>CATALYTIC ACTIVITY</scope>
    <scope>BIOPHYSICOCHEMICAL PROPERTIES</scope>
    <scope>PATHWAY</scope>
    <scope>TISSUE SPECIFICITY</scope>
</reference>
<reference key="3">
    <citation type="journal article" date="2024" name="Nat. Commun.">
        <title>De novo biosynthesis of antiarrhythmic alkaloid ajmaline.</title>
        <authorList>
            <person name="Guo J."/>
            <person name="Gao D."/>
            <person name="Lian J."/>
            <person name="Qu Y."/>
        </authorList>
    </citation>
    <scope>FUNCTION</scope>
    <scope>CATALYTIC ACTIVITY</scope>
    <scope>PATHWAY</scope>
    <scope>TISSUE SPECIFICITY</scope>
    <scope>BIOTECHNOLOGY</scope>
</reference>
<sequence>MAEKQQAVTEFYNNTSPRGAWEFLLGDHLHEGFYDPGTTATISGSQAAAARMIDEALRFANIYDDPSKKPKNMLDIGCGVGGTCVHVAKQYGIQCKGITLSPEEVKCAQGIAKAQGLEEKVSFDVGDALNLPYKDGTFDLVLTIECIEHVQDKEKFIREMIRVAAPGAPIVILSYAHRNLSPSAESLKPDEKKVLKKICDNLALSCLCSSADFVRWLTQLPAEDIKTADWTQNTSPFFPLLMKETFTWKGFTSLLMKGGWTAIKELLALRMMSKAADDGLLKFVAITCRKSK</sequence>
<comment type="function">
    <text evidence="5 6">N-methyltransferase involved in the biosynthesis of ajmaline-type monoterpenoid indole alkaloids (MIAs) natural products, important plant-derived pharmaceuticals used in the therapy of heart disorders (PubMed:27122470, PubMed:38212296). Catalyzes the indole N-methylation of norajmaline to produce ajmaline (PubMed:27122470, PubMed:38212296). Also able, with a lower efficiency, to mediates the conversion of 4-methylnorajmaline to 4-methylajmaline (PubMed:27122470).</text>
</comment>
<comment type="catalytic activity">
    <reaction evidence="5 6">
        <text>norajmaline + S-adenosyl-L-methionine = ajmaline + S-adenosyl-L-homocysteine + H(+)</text>
        <dbReference type="Rhea" id="RHEA:79599"/>
        <dbReference type="ChEBI" id="CHEBI:15378"/>
        <dbReference type="ChEBI" id="CHEBI:57856"/>
        <dbReference type="ChEBI" id="CHEBI:58567"/>
        <dbReference type="ChEBI" id="CHEBI:59789"/>
        <dbReference type="ChEBI" id="CHEBI:77618"/>
        <dbReference type="EC" id="2.1.1.392"/>
    </reaction>
    <physiologicalReaction direction="left-to-right" evidence="5 6">
        <dbReference type="Rhea" id="RHEA:79600"/>
    </physiologicalReaction>
</comment>
<comment type="catalytic activity">
    <reaction evidence="5">
        <text>4-methylnorajmaline + S-adenosyl-L-methionine = 4-methylajmaline + S-adenosyl-L-homocysteine + H(+)</text>
        <dbReference type="Rhea" id="RHEA:79603"/>
        <dbReference type="ChEBI" id="CHEBI:15378"/>
        <dbReference type="ChEBI" id="CHEBI:57856"/>
        <dbReference type="ChEBI" id="CHEBI:59789"/>
        <dbReference type="ChEBI" id="CHEBI:230509"/>
        <dbReference type="ChEBI" id="CHEBI:230510"/>
        <dbReference type="EC" id="2.1.1.392"/>
    </reaction>
    <physiologicalReaction direction="left-to-right" evidence="5">
        <dbReference type="Rhea" id="RHEA:79604"/>
    </physiologicalReaction>
</comment>
<comment type="biophysicochemical properties">
    <kinetics>
        <KM evidence="5">3.5 uM for S-adenosyl-L-methionine</KM>
        <KM evidence="5">4.4 uM for norajmaline</KM>
        <Vmax evidence="5">96.9 pmol/sec/mg enzyme with S-adenosyl-L-methionine as substrate</Vmax>
        <Vmax evidence="5">111.2 pmol/sec/mg enzyme with norajmaline as substrate</Vmax>
        <text evidence="5">kcat is 1.8 sec(-1) with S-adenosyl-L-methionine as substrate (PubMed:27122470). kcat is 2.1 sec(-1) with norajmaline as substrate (PubMed:27122470).</text>
    </kinetics>
    <phDependence>
        <text evidence="5">Optimum pH is 7.5.</text>
    </phDependence>
    <temperatureDependence>
        <text evidence="5">Optimum temperature is 30 degrees Celsius.</text>
    </temperatureDependence>
</comment>
<comment type="pathway">
    <text evidence="5 6">Alkaloid biosynthesis; ajmaline biosynthesis.</text>
</comment>
<comment type="subunit">
    <text evidence="2">Homodimer.</text>
</comment>
<comment type="subcellular location">
    <subcellularLocation>
        <location evidence="1">Vacuole membrane</location>
    </subcellularLocation>
</comment>
<comment type="tissue specificity">
    <text evidence="5 6">Mainly expressed in mature roots and, to a lesser extent, in leaves, stems and flowers.</text>
</comment>
<comment type="biotechnology">
    <text evidence="6">The strictosidine aglycone-producing AJM7-DeltaHYS yeast strain expressing pathway genes of the VOM module, RsGS, SBE (GsSBE, RsSBE1 or RsSBE2), RsPNAE, RsVS and RsVH, accumulates vomilenine (PubMed:38212296). Additionnal expression of pathway genes of the AJM module, RsVR, RsDHVR, AAE (RsAAE1 or RsAAE2) and RsNNMT, leads to the production of ajmaline (PubMed:38212296). Ajmaline is an anti-arrhythmic alkaloid commercially used as an efficient drug for the treatment of arrhythmic heart disorder (PubMed:38212296).</text>
</comment>
<comment type="similarity">
    <text evidence="4">Belongs to the class I-like SAM-binding methyltransferase superfamily. gTMT family.</text>
</comment>
<evidence type="ECO:0000250" key="1">
    <source>
        <dbReference type="UniProtKB" id="A0A075D5I4"/>
    </source>
</evidence>
<evidence type="ECO:0000250" key="2">
    <source>
        <dbReference type="UniProtKB" id="W5U2K2"/>
    </source>
</evidence>
<evidence type="ECO:0000255" key="3"/>
<evidence type="ECO:0000255" key="4">
    <source>
        <dbReference type="PROSITE-ProRule" id="PRU00914"/>
    </source>
</evidence>
<evidence type="ECO:0000269" key="5">
    <source>
    </source>
</evidence>
<evidence type="ECO:0000269" key="6">
    <source>
    </source>
</evidence>
<evidence type="ECO:0000303" key="7">
    <source>
    </source>
</evidence>
<evidence type="ECO:0000303" key="8">
    <source>
    </source>
</evidence>
<evidence type="ECO:0000312" key="9">
    <source>
        <dbReference type="EMBL" id="AHH02781.1"/>
    </source>
</evidence>
<protein>
    <recommendedName>
        <fullName evidence="7 8">Norajmaline N-methyltransferase</fullName>
        <shortName evidence="7 8">RsNNMT</shortName>
        <ecNumber evidence="6">2.1.1.392</ecNumber>
    </recommendedName>
    <alternativeName>
        <fullName evidence="9">Gamma-tocopherol-like methyltransferase NNMT</fullName>
    </alternativeName>
</protein>
<gene>
    <name evidence="8" type="primary">NNMT</name>
    <name evidence="9" type="synonym">Rs9447</name>
</gene>
<feature type="chain" id="PRO_0000462320" description="Norajmaline N-methyltransferase">
    <location>
        <begin position="1"/>
        <end position="292"/>
    </location>
</feature>
<feature type="region of interest" description="SAM motif I" evidence="4">
    <location>
        <begin position="71"/>
        <end position="80"/>
    </location>
</feature>
<feature type="region of interest" description="SAM motif II" evidence="4">
    <location>
        <begin position="134"/>
        <end position="142"/>
    </location>
</feature>
<feature type="region of interest" description="SAM motif III" evidence="4">
    <location>
        <begin position="161"/>
        <end position="170"/>
    </location>
</feature>
<feature type="short sequence motif" description="Vacuolar targeting signal" evidence="3">
    <location>
        <begin position="135"/>
        <end position="141"/>
    </location>
</feature>
<accession>A0A075D6M1</accession>
<dbReference type="EC" id="2.1.1.392" evidence="6"/>
<dbReference type="EMBL" id="KC708449">
    <property type="protein sequence ID" value="AHH02781.1"/>
    <property type="molecule type" value="mRNA"/>
</dbReference>
<dbReference type="KEGG" id="ag:AHH02781"/>
<dbReference type="BioCyc" id="MetaCyc:MONOMER-20648"/>
<dbReference type="UniPathway" id="UPA00310"/>
<dbReference type="GO" id="GO:0005737">
    <property type="term" value="C:cytoplasm"/>
    <property type="evidence" value="ECO:0007669"/>
    <property type="project" value="UniProtKB-ARBA"/>
</dbReference>
<dbReference type="GO" id="GO:0008757">
    <property type="term" value="F:S-adenosylmethionine-dependent methyltransferase activity"/>
    <property type="evidence" value="ECO:0007669"/>
    <property type="project" value="InterPro"/>
</dbReference>
<dbReference type="GO" id="GO:0009820">
    <property type="term" value="P:alkaloid metabolic process"/>
    <property type="evidence" value="ECO:0007669"/>
    <property type="project" value="UniProtKB-KW"/>
</dbReference>
<dbReference type="GO" id="GO:0032259">
    <property type="term" value="P:methylation"/>
    <property type="evidence" value="ECO:0007669"/>
    <property type="project" value="UniProtKB-UniRule"/>
</dbReference>
<dbReference type="CDD" id="cd02440">
    <property type="entry name" value="AdoMet_MTases"/>
    <property type="match status" value="1"/>
</dbReference>
<dbReference type="Gene3D" id="3.40.50.150">
    <property type="entry name" value="Vaccinia Virus protein VP39"/>
    <property type="match status" value="1"/>
</dbReference>
<dbReference type="InterPro" id="IPR013216">
    <property type="entry name" value="Methyltransf_11"/>
</dbReference>
<dbReference type="InterPro" id="IPR025774">
    <property type="entry name" value="MTs_g-TMT"/>
</dbReference>
<dbReference type="InterPro" id="IPR029063">
    <property type="entry name" value="SAM-dependent_MTases_sf"/>
</dbReference>
<dbReference type="PANTHER" id="PTHR43591:SF81">
    <property type="entry name" value="MAGNESIUM PROTOPORPHYRIN IX METHYLTRANSFERASE, CHLOROPLASTIC-RELATED"/>
    <property type="match status" value="1"/>
</dbReference>
<dbReference type="PANTHER" id="PTHR43591">
    <property type="entry name" value="METHYLTRANSFERASE"/>
    <property type="match status" value="1"/>
</dbReference>
<dbReference type="Pfam" id="PF08241">
    <property type="entry name" value="Methyltransf_11"/>
    <property type="match status" value="1"/>
</dbReference>
<dbReference type="SUPFAM" id="SSF53335">
    <property type="entry name" value="S-adenosyl-L-methionine-dependent methyltransferases"/>
    <property type="match status" value="1"/>
</dbReference>
<dbReference type="PROSITE" id="PS51581">
    <property type="entry name" value="SAM_GTMT"/>
    <property type="match status" value="1"/>
</dbReference>
<keyword id="KW-0017">Alkaloid metabolism</keyword>
<keyword id="KW-0472">Membrane</keyword>
<keyword id="KW-0489">Methyltransferase</keyword>
<keyword id="KW-0949">S-adenosyl-L-methionine</keyword>
<keyword id="KW-0808">Transferase</keyword>
<keyword id="KW-0926">Vacuole</keyword>
<organism>
    <name type="scientific">Rauvolfia serpentina</name>
    <name type="common">Serpentine wood</name>
    <name type="synonym">Ophioxylon serpentinum</name>
    <dbReference type="NCBI Taxonomy" id="4060"/>
    <lineage>
        <taxon>Eukaryota</taxon>
        <taxon>Viridiplantae</taxon>
        <taxon>Streptophyta</taxon>
        <taxon>Embryophyta</taxon>
        <taxon>Tracheophyta</taxon>
        <taxon>Spermatophyta</taxon>
        <taxon>Magnoliopsida</taxon>
        <taxon>eudicotyledons</taxon>
        <taxon>Gunneridae</taxon>
        <taxon>Pentapetalae</taxon>
        <taxon>asterids</taxon>
        <taxon>lamiids</taxon>
        <taxon>Gentianales</taxon>
        <taxon>Apocynaceae</taxon>
        <taxon>Rauvolfioideae</taxon>
        <taxon>Vinceae</taxon>
        <taxon>Rauvolfiinae</taxon>
        <taxon>Rauvolfia</taxon>
    </lineage>
</organism>
<proteinExistence type="evidence at protein level"/>